<name>CHLI_ORYSJ</name>
<dbReference type="EC" id="6.6.1.1"/>
<dbReference type="EMBL" id="EF065606">
    <property type="protein sequence ID" value="ABK58608.1"/>
    <property type="molecule type" value="Genomic_DNA"/>
</dbReference>
<dbReference type="EMBL" id="EF065607">
    <property type="protein sequence ID" value="ABK58609.1"/>
    <property type="molecule type" value="mRNA"/>
</dbReference>
<dbReference type="EMBL" id="AC084767">
    <property type="protein sequence ID" value="AAX95610.1"/>
    <property type="molecule type" value="Genomic_DNA"/>
</dbReference>
<dbReference type="EMBL" id="DP000009">
    <property type="protein sequence ID" value="ABF97128.1"/>
    <property type="molecule type" value="Genomic_DNA"/>
</dbReference>
<dbReference type="EMBL" id="AP008209">
    <property type="protein sequence ID" value="BAF12407.1"/>
    <property type="molecule type" value="Genomic_DNA"/>
</dbReference>
<dbReference type="EMBL" id="AP014959">
    <property type="protein sequence ID" value="BAS84940.1"/>
    <property type="molecule type" value="Genomic_DNA"/>
</dbReference>
<dbReference type="EMBL" id="CM000140">
    <property type="protein sequence ID" value="EAZ27502.1"/>
    <property type="molecule type" value="Genomic_DNA"/>
</dbReference>
<dbReference type="EMBL" id="AK070720">
    <property type="protein sequence ID" value="BAG92109.1"/>
    <property type="molecule type" value="mRNA"/>
</dbReference>
<dbReference type="EMBL" id="AK104435">
    <property type="protein sequence ID" value="BAG96680.1"/>
    <property type="molecule type" value="mRNA"/>
</dbReference>
<dbReference type="RefSeq" id="XP_015627981.1">
    <property type="nucleotide sequence ID" value="XM_015772495.1"/>
</dbReference>
<dbReference type="SMR" id="Q53RM0"/>
<dbReference type="BioGRID" id="802296">
    <property type="interactions" value="1"/>
</dbReference>
<dbReference type="FunCoup" id="Q53RM0">
    <property type="interactions" value="472"/>
</dbReference>
<dbReference type="STRING" id="39947.Q53RM0"/>
<dbReference type="PaxDb" id="39947-Q53RM0"/>
<dbReference type="EnsemblPlants" id="Os03t0563300-01">
    <property type="protein sequence ID" value="Os03t0563300-01"/>
    <property type="gene ID" value="Os03g0563300"/>
</dbReference>
<dbReference type="Gramene" id="Os03t0563300-01">
    <property type="protein sequence ID" value="Os03t0563300-01"/>
    <property type="gene ID" value="Os03g0563300"/>
</dbReference>
<dbReference type="KEGG" id="dosa:Os03g0563300"/>
<dbReference type="eggNOG" id="ENOG502QRUY">
    <property type="taxonomic scope" value="Eukaryota"/>
</dbReference>
<dbReference type="HOGENOM" id="CLU_016684_0_0_1"/>
<dbReference type="InParanoid" id="Q53RM0"/>
<dbReference type="OMA" id="QDEMKLA"/>
<dbReference type="OrthoDB" id="34999at2759"/>
<dbReference type="UniPathway" id="UPA00668"/>
<dbReference type="Proteomes" id="UP000000763">
    <property type="component" value="Chromosome 3"/>
</dbReference>
<dbReference type="Proteomes" id="UP000007752">
    <property type="component" value="Chromosome 3"/>
</dbReference>
<dbReference type="Proteomes" id="UP000059680">
    <property type="component" value="Chromosome 3"/>
</dbReference>
<dbReference type="GO" id="GO:0009570">
    <property type="term" value="C:chloroplast stroma"/>
    <property type="evidence" value="ECO:0000318"/>
    <property type="project" value="GO_Central"/>
</dbReference>
<dbReference type="GO" id="GO:0005524">
    <property type="term" value="F:ATP binding"/>
    <property type="evidence" value="ECO:0007669"/>
    <property type="project" value="UniProtKB-KW"/>
</dbReference>
<dbReference type="GO" id="GO:0016887">
    <property type="term" value="F:ATP hydrolysis activity"/>
    <property type="evidence" value="ECO:0007669"/>
    <property type="project" value="InterPro"/>
</dbReference>
<dbReference type="GO" id="GO:0016851">
    <property type="term" value="F:magnesium chelatase activity"/>
    <property type="evidence" value="ECO:0007669"/>
    <property type="project" value="UniProtKB-EC"/>
</dbReference>
<dbReference type="GO" id="GO:0015995">
    <property type="term" value="P:chlorophyll biosynthetic process"/>
    <property type="evidence" value="ECO:0000318"/>
    <property type="project" value="GO_Central"/>
</dbReference>
<dbReference type="GO" id="GO:0015979">
    <property type="term" value="P:photosynthesis"/>
    <property type="evidence" value="ECO:0007669"/>
    <property type="project" value="UniProtKB-KW"/>
</dbReference>
<dbReference type="FunFam" id="1.10.8.80:FF:000001">
    <property type="entry name" value="Mg-protoporphyrin IX chelatase"/>
    <property type="match status" value="1"/>
</dbReference>
<dbReference type="FunFam" id="3.40.50.300:FF:000601">
    <property type="entry name" value="Mg-protoporphyrin IX chelatase"/>
    <property type="match status" value="1"/>
</dbReference>
<dbReference type="Gene3D" id="1.10.8.80">
    <property type="entry name" value="Magnesium chelatase subunit I, C-Terminal domain"/>
    <property type="match status" value="1"/>
</dbReference>
<dbReference type="Gene3D" id="3.40.50.300">
    <property type="entry name" value="P-loop containing nucleotide triphosphate hydrolases"/>
    <property type="match status" value="1"/>
</dbReference>
<dbReference type="InterPro" id="IPR003593">
    <property type="entry name" value="AAA+_ATPase"/>
</dbReference>
<dbReference type="InterPro" id="IPR045006">
    <property type="entry name" value="CHLI-like"/>
</dbReference>
<dbReference type="InterPro" id="IPR041628">
    <property type="entry name" value="ChlI/MoxR_AAA_lid"/>
</dbReference>
<dbReference type="InterPro" id="IPR011775">
    <property type="entry name" value="Mg_chelatase_ATPase-isu"/>
</dbReference>
<dbReference type="InterPro" id="IPR000523">
    <property type="entry name" value="Mg_chelatse_chII-like_cat_dom"/>
</dbReference>
<dbReference type="InterPro" id="IPR027417">
    <property type="entry name" value="P-loop_NTPase"/>
</dbReference>
<dbReference type="NCBIfam" id="TIGR02030">
    <property type="entry name" value="BchI-ChlI"/>
    <property type="match status" value="1"/>
</dbReference>
<dbReference type="PANTHER" id="PTHR32039">
    <property type="entry name" value="MAGNESIUM-CHELATASE SUBUNIT CHLI"/>
    <property type="match status" value="1"/>
</dbReference>
<dbReference type="PANTHER" id="PTHR32039:SF9">
    <property type="entry name" value="MAGNESIUM-CHELATASE SUBUNIT CHLI-2, CHLOROPLASTIC"/>
    <property type="match status" value="1"/>
</dbReference>
<dbReference type="Pfam" id="PF17863">
    <property type="entry name" value="AAA_lid_2"/>
    <property type="match status" value="1"/>
</dbReference>
<dbReference type="Pfam" id="PF01078">
    <property type="entry name" value="Mg_chelatase"/>
    <property type="match status" value="1"/>
</dbReference>
<dbReference type="SMART" id="SM00382">
    <property type="entry name" value="AAA"/>
    <property type="match status" value="1"/>
</dbReference>
<dbReference type="SUPFAM" id="SSF52540">
    <property type="entry name" value="P-loop containing nucleoside triphosphate hydrolases"/>
    <property type="match status" value="1"/>
</dbReference>
<comment type="function">
    <text evidence="3 4">Involved in chlorophyll biosynthesis. Catalyzes the insertion of magnesium ion into protoporphyrin IX to yield Mg-protoporphyrin IX. The reaction takes place in two steps, with an ATP-dependent activation followed by an ATP-dependent chelation step.</text>
</comment>
<comment type="catalytic activity">
    <reaction>
        <text>protoporphyrin IX + Mg(2+) + ATP + H2O = Mg-protoporphyrin IX + ADP + phosphate + 3 H(+)</text>
        <dbReference type="Rhea" id="RHEA:13961"/>
        <dbReference type="ChEBI" id="CHEBI:15377"/>
        <dbReference type="ChEBI" id="CHEBI:15378"/>
        <dbReference type="ChEBI" id="CHEBI:18420"/>
        <dbReference type="ChEBI" id="CHEBI:30616"/>
        <dbReference type="ChEBI" id="CHEBI:43474"/>
        <dbReference type="ChEBI" id="CHEBI:57306"/>
        <dbReference type="ChEBI" id="CHEBI:60492"/>
        <dbReference type="ChEBI" id="CHEBI:456216"/>
        <dbReference type="EC" id="6.6.1.1"/>
    </reaction>
</comment>
<comment type="activity regulation">
    <text evidence="1">Redox regulation; active in reducing conditions, inactive in oxidizing conditions. Thioredoxins f and m mediate the reversible reductive activation of oxidized CHLI (By similarity).</text>
</comment>
<comment type="pathway">
    <text>Porphyrin-containing compound metabolism; chlorophyll biosynthesis.</text>
</comment>
<comment type="subunit">
    <text evidence="3">The magnesium chelatase complex is a heterotrimer consisting of subunits CHLI, CHLD and CHLH.</text>
</comment>
<comment type="subcellular location">
    <subcellularLocation>
        <location evidence="6">Plastid</location>
        <location evidence="6">Chloroplast</location>
    </subcellularLocation>
</comment>
<comment type="similarity">
    <text evidence="5">Belongs to the Mg-chelatase subunits D/I family.</text>
</comment>
<gene>
    <name type="primary">CHLI</name>
    <name type="synonym">CHL9</name>
    <name type="ordered locus">Os03g0563300</name>
    <name type="ordered locus">LOC_Os03g36540</name>
    <name type="ORF">OsJ_11451</name>
</gene>
<proteinExistence type="evidence at protein level"/>
<protein>
    <recommendedName>
        <fullName>Magnesium-chelatase subunit ChlI, chloroplastic</fullName>
        <shortName>Mg-chelatase subunit I</shortName>
        <ecNumber>6.6.1.1</ecNumber>
    </recommendedName>
    <alternativeName>
        <fullName>Mg-protoporphyrin IX chelatase subunit ChlI</fullName>
    </alternativeName>
    <alternativeName>
        <fullName>Protein CHLORINA 9</fullName>
    </alternativeName>
</protein>
<accession>Q53RM0</accession>
<accession>A0A0P0VZB0</accession>
<feature type="transit peptide" description="Chloroplast" evidence="2">
    <location>
        <begin position="1"/>
        <end position="67"/>
    </location>
</feature>
<feature type="chain" id="PRO_0000418771" description="Magnesium-chelatase subunit ChlI, chloroplastic">
    <location>
        <begin position="68"/>
        <end position="415"/>
    </location>
</feature>
<feature type="disulfide bond" evidence="1">
    <location>
        <begin position="93"/>
        <end position="184"/>
    </location>
</feature>
<feature type="disulfide bond" description="Inhibitory under oxidizing conditions" evidence="1">
    <location>
        <begin position="345"/>
        <end position="387"/>
    </location>
</feature>
<feature type="mutagenesis site" description="In chl9; yellowish-green leaf phenotype." evidence="3">
    <original>R</original>
    <variation>C</variation>
    <location>
        <position position="307"/>
    </location>
</feature>
<evidence type="ECO:0000250" key="1"/>
<evidence type="ECO:0000255" key="2"/>
<evidence type="ECO:0000269" key="3">
    <source>
    </source>
</evidence>
<evidence type="ECO:0000269" key="4">
    <source>
    </source>
</evidence>
<evidence type="ECO:0000305" key="5"/>
<evidence type="ECO:0000305" key="6">
    <source>
    </source>
</evidence>
<keyword id="KW-0067">ATP-binding</keyword>
<keyword id="KW-0149">Chlorophyll biosynthesis</keyword>
<keyword id="KW-0150">Chloroplast</keyword>
<keyword id="KW-1015">Disulfide bond</keyword>
<keyword id="KW-0436">Ligase</keyword>
<keyword id="KW-0547">Nucleotide-binding</keyword>
<keyword id="KW-0602">Photosynthesis</keyword>
<keyword id="KW-0934">Plastid</keyword>
<keyword id="KW-1185">Reference proteome</keyword>
<keyword id="KW-0809">Transit peptide</keyword>
<organism>
    <name type="scientific">Oryza sativa subsp. japonica</name>
    <name type="common">Rice</name>
    <dbReference type="NCBI Taxonomy" id="39947"/>
    <lineage>
        <taxon>Eukaryota</taxon>
        <taxon>Viridiplantae</taxon>
        <taxon>Streptophyta</taxon>
        <taxon>Embryophyta</taxon>
        <taxon>Tracheophyta</taxon>
        <taxon>Spermatophyta</taxon>
        <taxon>Magnoliopsida</taxon>
        <taxon>Liliopsida</taxon>
        <taxon>Poales</taxon>
        <taxon>Poaceae</taxon>
        <taxon>BOP clade</taxon>
        <taxon>Oryzoideae</taxon>
        <taxon>Oryzeae</taxon>
        <taxon>Oryzinae</taxon>
        <taxon>Oryza</taxon>
        <taxon>Oryza sativa</taxon>
    </lineage>
</organism>
<reference key="1">
    <citation type="journal article" date="2006" name="Plant Mol. Biol.">
        <title>Rice Chlorina-1 and Chlorina-9 encode ChlD and ChlI subunits of Mg-chelatase, a key enzyme for chlorophyll synthesis and chloroplast development.</title>
        <authorList>
            <person name="Zhang H."/>
            <person name="Li J."/>
            <person name="Yoo J.H."/>
            <person name="Yoo S.C."/>
            <person name="Cho S.H."/>
            <person name="Koh H.J."/>
            <person name="Seo H.S."/>
            <person name="Paek N.C."/>
        </authorList>
    </citation>
    <scope>NUCLEOTIDE SEQUENCE [GENOMIC DNA / MRNA]</scope>
    <scope>FUNCTION</scope>
    <scope>SUBCELLULAR LOCATION</scope>
    <scope>SUBUNIT</scope>
    <scope>MUTAGENESIS OF ARG-307</scope>
</reference>
<reference key="2">
    <citation type="journal article" date="2005" name="Genome Res.">
        <title>Sequence, annotation, and analysis of synteny between rice chromosome 3 and diverged grass species.</title>
        <authorList>
            <consortium name="The rice chromosome 3 sequencing consortium"/>
            <person name="Buell C.R."/>
            <person name="Yuan Q."/>
            <person name="Ouyang S."/>
            <person name="Liu J."/>
            <person name="Zhu W."/>
            <person name="Wang A."/>
            <person name="Maiti R."/>
            <person name="Haas B."/>
            <person name="Wortman J."/>
            <person name="Pertea M."/>
            <person name="Jones K.M."/>
            <person name="Kim M."/>
            <person name="Overton L."/>
            <person name="Tsitrin T."/>
            <person name="Fadrosh D."/>
            <person name="Bera J."/>
            <person name="Weaver B."/>
            <person name="Jin S."/>
            <person name="Johri S."/>
            <person name="Reardon M."/>
            <person name="Webb K."/>
            <person name="Hill J."/>
            <person name="Moffat K."/>
            <person name="Tallon L."/>
            <person name="Van Aken S."/>
            <person name="Lewis M."/>
            <person name="Utterback T."/>
            <person name="Feldblyum T."/>
            <person name="Zismann V."/>
            <person name="Iobst S."/>
            <person name="Hsiao J."/>
            <person name="de Vazeille A.R."/>
            <person name="Salzberg S.L."/>
            <person name="White O."/>
            <person name="Fraser C.M."/>
            <person name="Yu Y."/>
            <person name="Kim H."/>
            <person name="Rambo T."/>
            <person name="Currie J."/>
            <person name="Collura K."/>
            <person name="Kernodle-Thompson S."/>
            <person name="Wei F."/>
            <person name="Kudrna K."/>
            <person name="Ammiraju J.S.S."/>
            <person name="Luo M."/>
            <person name="Goicoechea J.L."/>
            <person name="Wing R.A."/>
            <person name="Henry D."/>
            <person name="Oates R."/>
            <person name="Palmer M."/>
            <person name="Pries G."/>
            <person name="Saski C."/>
            <person name="Simmons J."/>
            <person name="Soderlund C."/>
            <person name="Nelson W."/>
            <person name="de la Bastide M."/>
            <person name="Spiegel L."/>
            <person name="Nascimento L."/>
            <person name="Huang E."/>
            <person name="Preston R."/>
            <person name="Zutavern T."/>
            <person name="Palmer L."/>
            <person name="O'Shaughnessy A."/>
            <person name="Dike S."/>
            <person name="McCombie W.R."/>
            <person name="Minx P."/>
            <person name="Cordum H."/>
            <person name="Wilson R."/>
            <person name="Jin W."/>
            <person name="Lee H.R."/>
            <person name="Jiang J."/>
            <person name="Jackson S."/>
        </authorList>
    </citation>
    <scope>NUCLEOTIDE SEQUENCE [LARGE SCALE GENOMIC DNA]</scope>
    <source>
        <strain>cv. Nipponbare</strain>
    </source>
</reference>
<reference key="3">
    <citation type="journal article" date="2005" name="Nature">
        <title>The map-based sequence of the rice genome.</title>
        <authorList>
            <consortium name="International rice genome sequencing project (IRGSP)"/>
        </authorList>
    </citation>
    <scope>NUCLEOTIDE SEQUENCE [LARGE SCALE GENOMIC DNA]</scope>
    <source>
        <strain>cv. Nipponbare</strain>
    </source>
</reference>
<reference key="4">
    <citation type="journal article" date="2008" name="Nucleic Acids Res.">
        <title>The rice annotation project database (RAP-DB): 2008 update.</title>
        <authorList>
            <consortium name="The rice annotation project (RAP)"/>
        </authorList>
    </citation>
    <scope>GENOME REANNOTATION</scope>
    <source>
        <strain>cv. Nipponbare</strain>
    </source>
</reference>
<reference key="5">
    <citation type="journal article" date="2013" name="Rice">
        <title>Improvement of the Oryza sativa Nipponbare reference genome using next generation sequence and optical map data.</title>
        <authorList>
            <person name="Kawahara Y."/>
            <person name="de la Bastide M."/>
            <person name="Hamilton J.P."/>
            <person name="Kanamori H."/>
            <person name="McCombie W.R."/>
            <person name="Ouyang S."/>
            <person name="Schwartz D.C."/>
            <person name="Tanaka T."/>
            <person name="Wu J."/>
            <person name="Zhou S."/>
            <person name="Childs K.L."/>
            <person name="Davidson R.M."/>
            <person name="Lin H."/>
            <person name="Quesada-Ocampo L."/>
            <person name="Vaillancourt B."/>
            <person name="Sakai H."/>
            <person name="Lee S.S."/>
            <person name="Kim J."/>
            <person name="Numa H."/>
            <person name="Itoh T."/>
            <person name="Buell C.R."/>
            <person name="Matsumoto T."/>
        </authorList>
    </citation>
    <scope>GENOME REANNOTATION</scope>
    <source>
        <strain>cv. Nipponbare</strain>
    </source>
</reference>
<reference key="6">
    <citation type="journal article" date="2005" name="PLoS Biol.">
        <title>The genomes of Oryza sativa: a history of duplications.</title>
        <authorList>
            <person name="Yu J."/>
            <person name="Wang J."/>
            <person name="Lin W."/>
            <person name="Li S."/>
            <person name="Li H."/>
            <person name="Zhou J."/>
            <person name="Ni P."/>
            <person name="Dong W."/>
            <person name="Hu S."/>
            <person name="Zeng C."/>
            <person name="Zhang J."/>
            <person name="Zhang Y."/>
            <person name="Li R."/>
            <person name="Xu Z."/>
            <person name="Li S."/>
            <person name="Li X."/>
            <person name="Zheng H."/>
            <person name="Cong L."/>
            <person name="Lin L."/>
            <person name="Yin J."/>
            <person name="Geng J."/>
            <person name="Li G."/>
            <person name="Shi J."/>
            <person name="Liu J."/>
            <person name="Lv H."/>
            <person name="Li J."/>
            <person name="Wang J."/>
            <person name="Deng Y."/>
            <person name="Ran L."/>
            <person name="Shi X."/>
            <person name="Wang X."/>
            <person name="Wu Q."/>
            <person name="Li C."/>
            <person name="Ren X."/>
            <person name="Wang J."/>
            <person name="Wang X."/>
            <person name="Li D."/>
            <person name="Liu D."/>
            <person name="Zhang X."/>
            <person name="Ji Z."/>
            <person name="Zhao W."/>
            <person name="Sun Y."/>
            <person name="Zhang Z."/>
            <person name="Bao J."/>
            <person name="Han Y."/>
            <person name="Dong L."/>
            <person name="Ji J."/>
            <person name="Chen P."/>
            <person name="Wu S."/>
            <person name="Liu J."/>
            <person name="Xiao Y."/>
            <person name="Bu D."/>
            <person name="Tan J."/>
            <person name="Yang L."/>
            <person name="Ye C."/>
            <person name="Zhang J."/>
            <person name="Xu J."/>
            <person name="Zhou Y."/>
            <person name="Yu Y."/>
            <person name="Zhang B."/>
            <person name="Zhuang S."/>
            <person name="Wei H."/>
            <person name="Liu B."/>
            <person name="Lei M."/>
            <person name="Yu H."/>
            <person name="Li Y."/>
            <person name="Xu H."/>
            <person name="Wei S."/>
            <person name="He X."/>
            <person name="Fang L."/>
            <person name="Zhang Z."/>
            <person name="Zhang Y."/>
            <person name="Huang X."/>
            <person name="Su Z."/>
            <person name="Tong W."/>
            <person name="Li J."/>
            <person name="Tong Z."/>
            <person name="Li S."/>
            <person name="Ye J."/>
            <person name="Wang L."/>
            <person name="Fang L."/>
            <person name="Lei T."/>
            <person name="Chen C.-S."/>
            <person name="Chen H.-C."/>
            <person name="Xu Z."/>
            <person name="Li H."/>
            <person name="Huang H."/>
            <person name="Zhang F."/>
            <person name="Xu H."/>
            <person name="Li N."/>
            <person name="Zhao C."/>
            <person name="Li S."/>
            <person name="Dong L."/>
            <person name="Huang Y."/>
            <person name="Li L."/>
            <person name="Xi Y."/>
            <person name="Qi Q."/>
            <person name="Li W."/>
            <person name="Zhang B."/>
            <person name="Hu W."/>
            <person name="Zhang Y."/>
            <person name="Tian X."/>
            <person name="Jiao Y."/>
            <person name="Liang X."/>
            <person name="Jin J."/>
            <person name="Gao L."/>
            <person name="Zheng W."/>
            <person name="Hao B."/>
            <person name="Liu S.-M."/>
            <person name="Wang W."/>
            <person name="Yuan L."/>
            <person name="Cao M."/>
            <person name="McDermott J."/>
            <person name="Samudrala R."/>
            <person name="Wang J."/>
            <person name="Wong G.K.-S."/>
            <person name="Yang H."/>
        </authorList>
    </citation>
    <scope>NUCLEOTIDE SEQUENCE [LARGE SCALE GENOMIC DNA]</scope>
    <source>
        <strain>cv. Nipponbare</strain>
    </source>
</reference>
<reference key="7">
    <citation type="journal article" date="2003" name="Science">
        <title>Collection, mapping, and annotation of over 28,000 cDNA clones from japonica rice.</title>
        <authorList>
            <consortium name="The rice full-length cDNA consortium"/>
        </authorList>
    </citation>
    <scope>NUCLEOTIDE SEQUENCE [LARGE SCALE MRNA]</scope>
    <source>
        <strain>cv. Nipponbare</strain>
    </source>
</reference>
<reference key="8">
    <citation type="journal article" date="2012" name="FEBS Lett.">
        <title>C-terminal residues of oryza sativa GUN4 are required for the activation of the ChlH subunit of magnesium chelatase in chlorophyll synthesis.</title>
        <authorList>
            <person name="Zhou S."/>
            <person name="Sawicki A."/>
            <person name="Willows R.D."/>
            <person name="Luo M."/>
        </authorList>
    </citation>
    <scope>FUNCTION</scope>
</reference>
<sequence>MASAFSPATAAPAASPALFSASTSRPLSLTAAAAAVSARIPSRRGFRRGRFTVCNVAAPSATQQEAKAAGAKESQRPVYPFAAIVGQDEMKLCLLLNVIDPKIGGVMIMGDRGTGKSTTVRSLVDLLPDIRVVVGDPFNSDPDDPEVMGPEVRERVLEGEKLPVVTAKITMVDLPLGATEDRVCGTIDIEKALTDGVKAFEPGLLAKANRGILYVDEVNLLDDHLVDVLLDSAASGWNTVEREGISISHPARFILIGSGNPEEGELRPQLLDRFGMHAQVGTVRDAELRVKIVEERARFDRDPKAFRESYLEEQDKLQQQISSARSNLGAVQIDHDLRVKISKVCAELNVDGLRGDIVTNRAAKALAALKGRDTVTVEDIATVIPNCLRHRLRKDPLESIDSGLLVVEKFYEVFT</sequence>